<name>Y965_MYCTU</name>
<reference key="1">
    <citation type="journal article" date="1998" name="Nature">
        <title>Deciphering the biology of Mycobacterium tuberculosis from the complete genome sequence.</title>
        <authorList>
            <person name="Cole S.T."/>
            <person name="Brosch R."/>
            <person name="Parkhill J."/>
            <person name="Garnier T."/>
            <person name="Churcher C.M."/>
            <person name="Harris D.E."/>
            <person name="Gordon S.V."/>
            <person name="Eiglmeier K."/>
            <person name="Gas S."/>
            <person name="Barry C.E. III"/>
            <person name="Tekaia F."/>
            <person name="Badcock K."/>
            <person name="Basham D."/>
            <person name="Brown D."/>
            <person name="Chillingworth T."/>
            <person name="Connor R."/>
            <person name="Davies R.M."/>
            <person name="Devlin K."/>
            <person name="Feltwell T."/>
            <person name="Gentles S."/>
            <person name="Hamlin N."/>
            <person name="Holroyd S."/>
            <person name="Hornsby T."/>
            <person name="Jagels K."/>
            <person name="Krogh A."/>
            <person name="McLean J."/>
            <person name="Moule S."/>
            <person name="Murphy L.D."/>
            <person name="Oliver S."/>
            <person name="Osborne J."/>
            <person name="Quail M.A."/>
            <person name="Rajandream M.A."/>
            <person name="Rogers J."/>
            <person name="Rutter S."/>
            <person name="Seeger K."/>
            <person name="Skelton S."/>
            <person name="Squares S."/>
            <person name="Squares R."/>
            <person name="Sulston J.E."/>
            <person name="Taylor K."/>
            <person name="Whitehead S."/>
            <person name="Barrell B.G."/>
        </authorList>
    </citation>
    <scope>NUCLEOTIDE SEQUENCE [LARGE SCALE GENOMIC DNA]</scope>
    <source>
        <strain>ATCC 25618 / H37Rv</strain>
    </source>
</reference>
<gene>
    <name type="ordered locus">Rv0965c</name>
    <name type="ORF">MTCY10D7.09</name>
</gene>
<accession>P9WKM3</accession>
<accession>L0T6X9</accession>
<accession>P71545</accession>
<feature type="chain" id="PRO_0000103763" description="Uncharacterized protein Rv0965c">
    <location>
        <begin position="1"/>
        <end position="139"/>
    </location>
</feature>
<protein>
    <recommendedName>
        <fullName>Uncharacterized protein Rv0965c</fullName>
    </recommendedName>
</protein>
<dbReference type="EMBL" id="AL123456">
    <property type="protein sequence ID" value="CCP43714.1"/>
    <property type="molecule type" value="Genomic_DNA"/>
</dbReference>
<dbReference type="PIR" id="C70718">
    <property type="entry name" value="C70718"/>
</dbReference>
<dbReference type="RefSeq" id="NP_215480.1">
    <property type="nucleotide sequence ID" value="NC_000962.3"/>
</dbReference>
<dbReference type="RefSeq" id="WP_003404920.1">
    <property type="nucleotide sequence ID" value="NZ_NVQJ01000001.1"/>
</dbReference>
<dbReference type="SMR" id="P9WKM3"/>
<dbReference type="STRING" id="83332.Rv0965c"/>
<dbReference type="PaxDb" id="83332-Rv0965c"/>
<dbReference type="DNASU" id="885230"/>
<dbReference type="GeneID" id="885230"/>
<dbReference type="KEGG" id="mtu:Rv0965c"/>
<dbReference type="KEGG" id="mtv:RVBD_0965c"/>
<dbReference type="TubercuList" id="Rv0965c"/>
<dbReference type="eggNOG" id="ENOG5031Q6Z">
    <property type="taxonomic scope" value="Bacteria"/>
</dbReference>
<dbReference type="InParanoid" id="P9WKM3"/>
<dbReference type="OrthoDB" id="4751353at2"/>
<dbReference type="Proteomes" id="UP000001584">
    <property type="component" value="Chromosome"/>
</dbReference>
<keyword id="KW-1185">Reference proteome</keyword>
<organism>
    <name type="scientific">Mycobacterium tuberculosis (strain ATCC 25618 / H37Rv)</name>
    <dbReference type="NCBI Taxonomy" id="83332"/>
    <lineage>
        <taxon>Bacteria</taxon>
        <taxon>Bacillati</taxon>
        <taxon>Actinomycetota</taxon>
        <taxon>Actinomycetes</taxon>
        <taxon>Mycobacteriales</taxon>
        <taxon>Mycobacteriaceae</taxon>
        <taxon>Mycobacterium</taxon>
        <taxon>Mycobacterium tuberculosis complex</taxon>
    </lineage>
</organism>
<comment type="similarity">
    <text evidence="1">To M.tuberculosis Rv2798c.</text>
</comment>
<sequence>MRVNRPQCARVPYSAESLVRVEASWYGRTLRAIPEVLSQVGYQQADHGESLLTSHHCCLGAAEGARPGWVGSSAGALSGLLDSWAEASTAHAARIGDHSYGMHLAAVGFAEMEEHNAAALAAVYPTGGGSARCDGVDVS</sequence>
<evidence type="ECO:0000305" key="1"/>
<proteinExistence type="predicted"/>